<dbReference type="EC" id="1.3.1.14"/>
<dbReference type="EMBL" id="CP000141">
    <property type="protein sequence ID" value="ABB14013.1"/>
    <property type="molecule type" value="Genomic_DNA"/>
</dbReference>
<dbReference type="RefSeq" id="WP_011344404.1">
    <property type="nucleotide sequence ID" value="NC_007503.1"/>
</dbReference>
<dbReference type="SMR" id="Q3AC05"/>
<dbReference type="FunCoup" id="Q3AC05">
    <property type="interactions" value="446"/>
</dbReference>
<dbReference type="STRING" id="246194.CHY_1497"/>
<dbReference type="KEGG" id="chy:CHY_1497"/>
<dbReference type="eggNOG" id="COG0167">
    <property type="taxonomic scope" value="Bacteria"/>
</dbReference>
<dbReference type="HOGENOM" id="CLU_042042_0_0_9"/>
<dbReference type="InParanoid" id="Q3AC05"/>
<dbReference type="OrthoDB" id="9794954at2"/>
<dbReference type="UniPathway" id="UPA00070">
    <property type="reaction ID" value="UER00945"/>
</dbReference>
<dbReference type="Proteomes" id="UP000002706">
    <property type="component" value="Chromosome"/>
</dbReference>
<dbReference type="GO" id="GO:0005737">
    <property type="term" value="C:cytoplasm"/>
    <property type="evidence" value="ECO:0007669"/>
    <property type="project" value="UniProtKB-SubCell"/>
</dbReference>
<dbReference type="GO" id="GO:0004589">
    <property type="term" value="F:dihydroorotate dehydrogenase (NAD+) activity"/>
    <property type="evidence" value="ECO:0007669"/>
    <property type="project" value="UniProtKB-EC"/>
</dbReference>
<dbReference type="GO" id="GO:0006207">
    <property type="term" value="P:'de novo' pyrimidine nucleobase biosynthetic process"/>
    <property type="evidence" value="ECO:0007669"/>
    <property type="project" value="InterPro"/>
</dbReference>
<dbReference type="GO" id="GO:0044205">
    <property type="term" value="P:'de novo' UMP biosynthetic process"/>
    <property type="evidence" value="ECO:0007669"/>
    <property type="project" value="UniProtKB-UniRule"/>
</dbReference>
<dbReference type="CDD" id="cd04740">
    <property type="entry name" value="DHOD_1B_like"/>
    <property type="match status" value="1"/>
</dbReference>
<dbReference type="FunFam" id="3.20.20.70:FF:000027">
    <property type="entry name" value="Dihydropyrimidine dehydrogenase [NADP(+)]"/>
    <property type="match status" value="1"/>
</dbReference>
<dbReference type="Gene3D" id="3.20.20.70">
    <property type="entry name" value="Aldolase class I"/>
    <property type="match status" value="1"/>
</dbReference>
<dbReference type="HAMAP" id="MF_00224">
    <property type="entry name" value="DHO_dh_type1"/>
    <property type="match status" value="1"/>
</dbReference>
<dbReference type="InterPro" id="IPR013785">
    <property type="entry name" value="Aldolase_TIM"/>
</dbReference>
<dbReference type="InterPro" id="IPR050074">
    <property type="entry name" value="DHO_dehydrogenase"/>
</dbReference>
<dbReference type="InterPro" id="IPR033888">
    <property type="entry name" value="DHOD_1B"/>
</dbReference>
<dbReference type="InterPro" id="IPR024920">
    <property type="entry name" value="Dihydroorotate_DH_1"/>
</dbReference>
<dbReference type="InterPro" id="IPR012135">
    <property type="entry name" value="Dihydroorotate_DH_1_2"/>
</dbReference>
<dbReference type="InterPro" id="IPR005720">
    <property type="entry name" value="Dihydroorotate_DH_cat"/>
</dbReference>
<dbReference type="InterPro" id="IPR001295">
    <property type="entry name" value="Dihydroorotate_DH_CS"/>
</dbReference>
<dbReference type="InterPro" id="IPR049622">
    <property type="entry name" value="Dihydroorotate_DH_I"/>
</dbReference>
<dbReference type="NCBIfam" id="NF005574">
    <property type="entry name" value="PRK07259.1"/>
    <property type="match status" value="1"/>
</dbReference>
<dbReference type="NCBIfam" id="TIGR01037">
    <property type="entry name" value="pyrD_sub1_fam"/>
    <property type="match status" value="1"/>
</dbReference>
<dbReference type="PANTHER" id="PTHR48109:SF1">
    <property type="entry name" value="DIHYDROOROTATE DEHYDROGENASE (FUMARATE)"/>
    <property type="match status" value="1"/>
</dbReference>
<dbReference type="PANTHER" id="PTHR48109">
    <property type="entry name" value="DIHYDROOROTATE DEHYDROGENASE (QUINONE), MITOCHONDRIAL-RELATED"/>
    <property type="match status" value="1"/>
</dbReference>
<dbReference type="Pfam" id="PF01180">
    <property type="entry name" value="DHO_dh"/>
    <property type="match status" value="1"/>
</dbReference>
<dbReference type="PIRSF" id="PIRSF000164">
    <property type="entry name" value="DHO_oxidase"/>
    <property type="match status" value="1"/>
</dbReference>
<dbReference type="SUPFAM" id="SSF51395">
    <property type="entry name" value="FMN-linked oxidoreductases"/>
    <property type="match status" value="1"/>
</dbReference>
<dbReference type="PROSITE" id="PS00911">
    <property type="entry name" value="DHODEHASE_1"/>
    <property type="match status" value="1"/>
</dbReference>
<dbReference type="PROSITE" id="PS00912">
    <property type="entry name" value="DHODEHASE_2"/>
    <property type="match status" value="1"/>
</dbReference>
<accession>Q3AC05</accession>
<organism>
    <name type="scientific">Carboxydothermus hydrogenoformans (strain ATCC BAA-161 / DSM 6008 / Z-2901)</name>
    <dbReference type="NCBI Taxonomy" id="246194"/>
    <lineage>
        <taxon>Bacteria</taxon>
        <taxon>Bacillati</taxon>
        <taxon>Bacillota</taxon>
        <taxon>Clostridia</taxon>
        <taxon>Thermoanaerobacterales</taxon>
        <taxon>Thermoanaerobacteraceae</taxon>
        <taxon>Carboxydothermus</taxon>
    </lineage>
</organism>
<sequence length="307" mass="33318">MNLKVKIGELTLKNPVMPASGTFGFGLEFKDIFDLKNLGALVVKTITKNPRLGNRPPRVYEVSCGMINSIGLANPGWDYFCEKILPQIKDLNDILILNIAGESVEEFQYLAREAQRFDEIKALELNVSCPNVSKGGIAFGTDLEALKQIVSSVRKIYSKTLIVKLTPNVTDITVYAKAAENAGADALTLINTFTGMVIDVKSKKPILGNKHGGVSGPAIRPMAVKMVYDCFKAVSIPIIGVGGIDSKEAALEFFLAGATAIQVGSQNFVEPGFMPRLIRELGEYLQEENIESIAKLTGLAHRGEENV</sequence>
<protein>
    <recommendedName>
        <fullName>Dihydroorotate dehydrogenase B (NAD(+)), catalytic subunit</fullName>
        <shortName>DHOD B</shortName>
        <shortName>DHODase B</shortName>
        <shortName>DHOdehase B</shortName>
        <ecNumber>1.3.1.14</ecNumber>
    </recommendedName>
    <alternativeName>
        <fullName>Dihydroorotate oxidase B</fullName>
    </alternativeName>
    <alternativeName>
        <fullName>Orotate reductase (NADH)</fullName>
    </alternativeName>
</protein>
<comment type="function">
    <text evidence="1">Catalyzes the conversion of dihydroorotate to orotate with NAD(+) as electron acceptor.</text>
</comment>
<comment type="catalytic activity">
    <reaction>
        <text>(S)-dihydroorotate + NAD(+) = orotate + NADH + H(+)</text>
        <dbReference type="Rhea" id="RHEA:13513"/>
        <dbReference type="ChEBI" id="CHEBI:15378"/>
        <dbReference type="ChEBI" id="CHEBI:30839"/>
        <dbReference type="ChEBI" id="CHEBI:30864"/>
        <dbReference type="ChEBI" id="CHEBI:57540"/>
        <dbReference type="ChEBI" id="CHEBI:57945"/>
        <dbReference type="EC" id="1.3.1.14"/>
    </reaction>
</comment>
<comment type="cofactor">
    <cofactor evidence="1">
        <name>FMN</name>
        <dbReference type="ChEBI" id="CHEBI:58210"/>
    </cofactor>
    <text evidence="1">Binds 1 FMN per subunit.</text>
</comment>
<comment type="pathway">
    <text>Pyrimidine metabolism; UMP biosynthesis via de novo pathway; orotate from (S)-dihydroorotate (NAD(+) route): step 1/1.</text>
</comment>
<comment type="subunit">
    <text evidence="1">Heterotetramer of 2 PyrK and 2 PyrD type B subunits.</text>
</comment>
<comment type="subcellular location">
    <subcellularLocation>
        <location evidence="1">Cytoplasm</location>
    </subcellularLocation>
</comment>
<comment type="similarity">
    <text evidence="2">Belongs to the dihydroorotate dehydrogenase family. Type 1 subfamily.</text>
</comment>
<reference key="1">
    <citation type="journal article" date="2005" name="PLoS Genet.">
        <title>Life in hot carbon monoxide: the complete genome sequence of Carboxydothermus hydrogenoformans Z-2901.</title>
        <authorList>
            <person name="Wu M."/>
            <person name="Ren Q."/>
            <person name="Durkin A.S."/>
            <person name="Daugherty S.C."/>
            <person name="Brinkac L.M."/>
            <person name="Dodson R.J."/>
            <person name="Madupu R."/>
            <person name="Sullivan S.A."/>
            <person name="Kolonay J.F."/>
            <person name="Nelson W.C."/>
            <person name="Tallon L.J."/>
            <person name="Jones K.M."/>
            <person name="Ulrich L.E."/>
            <person name="Gonzalez J.M."/>
            <person name="Zhulin I.B."/>
            <person name="Robb F.T."/>
            <person name="Eisen J.A."/>
        </authorList>
    </citation>
    <scope>NUCLEOTIDE SEQUENCE [LARGE SCALE GENOMIC DNA]</scope>
    <source>
        <strain>ATCC BAA-161 / DSM 6008 / Z-2901</strain>
    </source>
</reference>
<proteinExistence type="inferred from homology"/>
<gene>
    <name type="primary">pyrD</name>
    <name type="ordered locus">CHY_1497</name>
</gene>
<name>PYRDB_CARHZ</name>
<keyword id="KW-0963">Cytoplasm</keyword>
<keyword id="KW-0285">Flavoprotein</keyword>
<keyword id="KW-0288">FMN</keyword>
<keyword id="KW-0520">NAD</keyword>
<keyword id="KW-0560">Oxidoreductase</keyword>
<keyword id="KW-0665">Pyrimidine biosynthesis</keyword>
<keyword id="KW-1185">Reference proteome</keyword>
<evidence type="ECO:0000250" key="1"/>
<evidence type="ECO:0000305" key="2"/>
<feature type="chain" id="PRO_1000100219" description="Dihydroorotate dehydrogenase B (NAD(+)), catalytic subunit">
    <location>
        <begin position="1"/>
        <end position="307"/>
    </location>
</feature>
<feature type="active site" description="Nucleophile">
    <location>
        <position position="129"/>
    </location>
</feature>
<feature type="binding site" evidence="1">
    <location>
        <position position="20"/>
    </location>
    <ligand>
        <name>FMN</name>
        <dbReference type="ChEBI" id="CHEBI:58210"/>
    </ligand>
</feature>
<feature type="binding site" evidence="1">
    <location>
        <begin position="44"/>
        <end position="45"/>
    </location>
    <ligand>
        <name>FMN</name>
        <dbReference type="ChEBI" id="CHEBI:58210"/>
    </ligand>
</feature>
<feature type="binding site" evidence="1">
    <location>
        <position position="44"/>
    </location>
    <ligand>
        <name>substrate</name>
    </ligand>
</feature>
<feature type="binding site" evidence="1">
    <location>
        <begin position="68"/>
        <end position="72"/>
    </location>
    <ligand>
        <name>substrate</name>
    </ligand>
</feature>
<feature type="binding site" evidence="1">
    <location>
        <position position="98"/>
    </location>
    <ligand>
        <name>FMN</name>
        <dbReference type="ChEBI" id="CHEBI:58210"/>
    </ligand>
</feature>
<feature type="binding site" evidence="1">
    <location>
        <position position="126"/>
    </location>
    <ligand>
        <name>FMN</name>
        <dbReference type="ChEBI" id="CHEBI:58210"/>
    </ligand>
</feature>
<feature type="binding site" evidence="1">
    <location>
        <position position="126"/>
    </location>
    <ligand>
        <name>substrate</name>
    </ligand>
</feature>
<feature type="binding site" evidence="1">
    <location>
        <position position="164"/>
    </location>
    <ligand>
        <name>FMN</name>
        <dbReference type="ChEBI" id="CHEBI:58210"/>
    </ligand>
</feature>
<feature type="binding site" evidence="1">
    <location>
        <position position="190"/>
    </location>
    <ligand>
        <name>FMN</name>
        <dbReference type="ChEBI" id="CHEBI:58210"/>
    </ligand>
</feature>
<feature type="binding site" evidence="1">
    <location>
        <begin position="191"/>
        <end position="192"/>
    </location>
    <ligand>
        <name>substrate</name>
    </ligand>
</feature>
<feature type="binding site" evidence="1">
    <location>
        <position position="216"/>
    </location>
    <ligand>
        <name>FMN</name>
        <dbReference type="ChEBI" id="CHEBI:58210"/>
    </ligand>
</feature>
<feature type="binding site" evidence="1">
    <location>
        <begin position="242"/>
        <end position="243"/>
    </location>
    <ligand>
        <name>FMN</name>
        <dbReference type="ChEBI" id="CHEBI:58210"/>
    </ligand>
</feature>
<feature type="binding site" evidence="1">
    <location>
        <begin position="264"/>
        <end position="265"/>
    </location>
    <ligand>
        <name>FMN</name>
        <dbReference type="ChEBI" id="CHEBI:58210"/>
    </ligand>
</feature>